<organism>
    <name type="scientific">Shigella flexneri</name>
    <dbReference type="NCBI Taxonomy" id="623"/>
    <lineage>
        <taxon>Bacteria</taxon>
        <taxon>Pseudomonadati</taxon>
        <taxon>Pseudomonadota</taxon>
        <taxon>Gammaproteobacteria</taxon>
        <taxon>Enterobacterales</taxon>
        <taxon>Enterobacteriaceae</taxon>
        <taxon>Shigella</taxon>
    </lineage>
</organism>
<sequence>MINPNPKRSDEPVFWGLFGAGGMWSAIIAPVMILLVGILLPLGLFPGDALSYERVLAFAQSFIGRVFLFLMIVLPLWCGLHRMHHAMHDLKIHVPAGKWVFYGLAAILTVVTLIGVVTI</sequence>
<dbReference type="EMBL" id="AE005674">
    <property type="protein sequence ID" value="AAN45727.2"/>
    <property type="molecule type" value="Genomic_DNA"/>
</dbReference>
<dbReference type="EMBL" id="AE014073">
    <property type="protein sequence ID" value="AAP19511.1"/>
    <property type="molecule type" value="Genomic_DNA"/>
</dbReference>
<dbReference type="RefSeq" id="NP_710020.2">
    <property type="nucleotide sequence ID" value="NC_004337.2"/>
</dbReference>
<dbReference type="RefSeq" id="WP_000609663.1">
    <property type="nucleotide sequence ID" value="NZ_WPGW01000002.1"/>
</dbReference>
<dbReference type="SMR" id="P0A8Q5"/>
<dbReference type="STRING" id="198214.SF4309"/>
<dbReference type="PaxDb" id="198214-SF4309"/>
<dbReference type="GeneID" id="1027357"/>
<dbReference type="GeneID" id="75169672"/>
<dbReference type="KEGG" id="sfl:SF4309"/>
<dbReference type="KEGG" id="sfx:S4574"/>
<dbReference type="PATRIC" id="fig|198214.7.peg.5080"/>
<dbReference type="HOGENOM" id="CLU_168367_0_0_6"/>
<dbReference type="Proteomes" id="UP000001006">
    <property type="component" value="Chromosome"/>
</dbReference>
<dbReference type="Proteomes" id="UP000002673">
    <property type="component" value="Chromosome"/>
</dbReference>
<dbReference type="GO" id="GO:0045283">
    <property type="term" value="C:fumarate reductase complex"/>
    <property type="evidence" value="ECO:0007669"/>
    <property type="project" value="UniProtKB-UniRule"/>
</dbReference>
<dbReference type="GO" id="GO:0005886">
    <property type="term" value="C:plasma membrane"/>
    <property type="evidence" value="ECO:0007669"/>
    <property type="project" value="UniProtKB-SubCell"/>
</dbReference>
<dbReference type="GO" id="GO:0000104">
    <property type="term" value="F:succinate dehydrogenase activity"/>
    <property type="evidence" value="ECO:0007669"/>
    <property type="project" value="UniProtKB-UniRule"/>
</dbReference>
<dbReference type="GO" id="GO:0006106">
    <property type="term" value="P:fumarate metabolic process"/>
    <property type="evidence" value="ECO:0007669"/>
    <property type="project" value="InterPro"/>
</dbReference>
<dbReference type="CDD" id="cd00547">
    <property type="entry name" value="QFR_TypeD_subunitD"/>
    <property type="match status" value="1"/>
</dbReference>
<dbReference type="FunFam" id="1.20.1300.10:FF:000002">
    <property type="entry name" value="Fumarate reductase subunit D"/>
    <property type="match status" value="1"/>
</dbReference>
<dbReference type="Gene3D" id="1.20.1300.10">
    <property type="entry name" value="Fumarate reductase/succinate dehydrogenase, transmembrane subunit"/>
    <property type="match status" value="1"/>
</dbReference>
<dbReference type="HAMAP" id="MF_00709">
    <property type="entry name" value="Fumarate_red_D"/>
    <property type="match status" value="1"/>
</dbReference>
<dbReference type="InterPro" id="IPR003418">
    <property type="entry name" value="Fumarate_red_D"/>
</dbReference>
<dbReference type="InterPro" id="IPR034804">
    <property type="entry name" value="SQR/QFR_C/D"/>
</dbReference>
<dbReference type="NCBIfam" id="NF003977">
    <property type="entry name" value="PRK05470.1-1"/>
    <property type="match status" value="1"/>
</dbReference>
<dbReference type="Pfam" id="PF02313">
    <property type="entry name" value="Fumarate_red_D"/>
    <property type="match status" value="1"/>
</dbReference>
<dbReference type="PIRSF" id="PIRSF000179">
    <property type="entry name" value="FrdD"/>
    <property type="match status" value="1"/>
</dbReference>
<dbReference type="SUPFAM" id="SSF81343">
    <property type="entry name" value="Fumarate reductase respiratory complex transmembrane subunits"/>
    <property type="match status" value="1"/>
</dbReference>
<accession>P0A8Q5</accession>
<accession>P03806</accession>
<accession>Q47048</accession>
<feature type="chain" id="PRO_0000196553" description="Fumarate reductase subunit D">
    <location>
        <begin position="1"/>
        <end position="119"/>
    </location>
</feature>
<feature type="transmembrane region" description="Helical" evidence="1">
    <location>
        <begin position="26"/>
        <end position="46"/>
    </location>
</feature>
<feature type="transmembrane region" description="Helical" evidence="1">
    <location>
        <begin position="55"/>
        <end position="75"/>
    </location>
</feature>
<feature type="transmembrane region" description="Helical" evidence="1">
    <location>
        <begin position="99"/>
        <end position="119"/>
    </location>
</feature>
<proteinExistence type="inferred from homology"/>
<gene>
    <name evidence="1" type="primary">frdD</name>
    <name type="ordered locus">SF4309</name>
    <name type="ordered locus">S4574</name>
</gene>
<protein>
    <recommendedName>
        <fullName evidence="1">Fumarate reductase subunit D</fullName>
    </recommendedName>
    <alternativeName>
        <fullName evidence="1">Fumarate reductase 13 kDa hydrophobic protein</fullName>
    </alternativeName>
    <alternativeName>
        <fullName evidence="1">Quinol-fumarate reductase subunit D</fullName>
        <shortName evidence="1">QFR subunit D</shortName>
    </alternativeName>
</protein>
<keyword id="KW-0997">Cell inner membrane</keyword>
<keyword id="KW-1003">Cell membrane</keyword>
<keyword id="KW-0472">Membrane</keyword>
<keyword id="KW-1185">Reference proteome</keyword>
<keyword id="KW-0812">Transmembrane</keyword>
<keyword id="KW-1133">Transmembrane helix</keyword>
<name>FRDD_SHIFL</name>
<evidence type="ECO:0000255" key="1">
    <source>
        <dbReference type="HAMAP-Rule" id="MF_00709"/>
    </source>
</evidence>
<comment type="function">
    <text evidence="1">Two distinct, membrane-bound, FAD-containing enzymes are responsible for the catalysis of fumarate and succinate interconversion; fumarate reductase is used in anaerobic growth, and succinate dehydrogenase is used in aerobic growth. Anchors the catalytic components of the fumarate reductase complex to the cell inner membrane, binds quinones.</text>
</comment>
<comment type="subunit">
    <text evidence="1">Part of an enzyme complex containing four subunits: a flavoprotein (FrdA), an iron-sulfur protein (FrdB), and two hydrophobic anchor proteins (FrdC and FrdD).</text>
</comment>
<comment type="subcellular location">
    <subcellularLocation>
        <location evidence="1">Cell inner membrane</location>
        <topology evidence="1">Multi-pass membrane protein</topology>
    </subcellularLocation>
</comment>
<comment type="similarity">
    <text evidence="1">Belongs to the FrdD family.</text>
</comment>
<reference key="1">
    <citation type="journal article" date="2002" name="Nucleic Acids Res.">
        <title>Genome sequence of Shigella flexneri 2a: insights into pathogenicity through comparison with genomes of Escherichia coli K12 and O157.</title>
        <authorList>
            <person name="Jin Q."/>
            <person name="Yuan Z."/>
            <person name="Xu J."/>
            <person name="Wang Y."/>
            <person name="Shen Y."/>
            <person name="Lu W."/>
            <person name="Wang J."/>
            <person name="Liu H."/>
            <person name="Yang J."/>
            <person name="Yang F."/>
            <person name="Zhang X."/>
            <person name="Zhang J."/>
            <person name="Yang G."/>
            <person name="Wu H."/>
            <person name="Qu D."/>
            <person name="Dong J."/>
            <person name="Sun L."/>
            <person name="Xue Y."/>
            <person name="Zhao A."/>
            <person name="Gao Y."/>
            <person name="Zhu J."/>
            <person name="Kan B."/>
            <person name="Ding K."/>
            <person name="Chen S."/>
            <person name="Cheng H."/>
            <person name="Yao Z."/>
            <person name="He B."/>
            <person name="Chen R."/>
            <person name="Ma D."/>
            <person name="Qiang B."/>
            <person name="Wen Y."/>
            <person name="Hou Y."/>
            <person name="Yu J."/>
        </authorList>
    </citation>
    <scope>NUCLEOTIDE SEQUENCE [LARGE SCALE GENOMIC DNA]</scope>
    <source>
        <strain>301 / Serotype 2a</strain>
    </source>
</reference>
<reference key="2">
    <citation type="journal article" date="2003" name="Infect. Immun.">
        <title>Complete genome sequence and comparative genomics of Shigella flexneri serotype 2a strain 2457T.</title>
        <authorList>
            <person name="Wei J."/>
            <person name="Goldberg M.B."/>
            <person name="Burland V."/>
            <person name="Venkatesan M.M."/>
            <person name="Deng W."/>
            <person name="Fournier G."/>
            <person name="Mayhew G.F."/>
            <person name="Plunkett G. III"/>
            <person name="Rose D.J."/>
            <person name="Darling A."/>
            <person name="Mau B."/>
            <person name="Perna N.T."/>
            <person name="Payne S.M."/>
            <person name="Runyen-Janecky L.J."/>
            <person name="Zhou S."/>
            <person name="Schwartz D.C."/>
            <person name="Blattner F.R."/>
        </authorList>
    </citation>
    <scope>NUCLEOTIDE SEQUENCE [LARGE SCALE GENOMIC DNA]</scope>
    <source>
        <strain>ATCC 700930 / 2457T / Serotype 2a</strain>
    </source>
</reference>